<feature type="chain" id="PRO_0000321508" description="Aspartate carbamoyltransferase regulatory chain">
    <location>
        <begin position="1"/>
        <end position="153"/>
    </location>
</feature>
<feature type="binding site" evidence="1">
    <location>
        <position position="109"/>
    </location>
    <ligand>
        <name>Zn(2+)</name>
        <dbReference type="ChEBI" id="CHEBI:29105"/>
    </ligand>
</feature>
<feature type="binding site" evidence="1">
    <location>
        <position position="114"/>
    </location>
    <ligand>
        <name>Zn(2+)</name>
        <dbReference type="ChEBI" id="CHEBI:29105"/>
    </ligand>
</feature>
<feature type="binding site" evidence="1">
    <location>
        <position position="135"/>
    </location>
    <ligand>
        <name>Zn(2+)</name>
        <dbReference type="ChEBI" id="CHEBI:29105"/>
    </ligand>
</feature>
<feature type="binding site" evidence="1">
    <location>
        <position position="138"/>
    </location>
    <ligand>
        <name>Zn(2+)</name>
        <dbReference type="ChEBI" id="CHEBI:29105"/>
    </ligand>
</feature>
<comment type="function">
    <text evidence="1">Involved in allosteric regulation of aspartate carbamoyltransferase.</text>
</comment>
<comment type="cofactor">
    <cofactor evidence="1">
        <name>Zn(2+)</name>
        <dbReference type="ChEBI" id="CHEBI:29105"/>
    </cofactor>
    <text evidence="1">Binds 1 zinc ion per subunit.</text>
</comment>
<comment type="subunit">
    <text evidence="1">Contains catalytic and regulatory chains.</text>
</comment>
<comment type="similarity">
    <text evidence="1">Belongs to the PyrI family.</text>
</comment>
<dbReference type="EMBL" id="CR936257">
    <property type="protein sequence ID" value="CAI49851.1"/>
    <property type="molecule type" value="Genomic_DNA"/>
</dbReference>
<dbReference type="RefSeq" id="WP_011323471.1">
    <property type="nucleotide sequence ID" value="NC_007426.1"/>
</dbReference>
<dbReference type="SMR" id="Q3IPU7"/>
<dbReference type="STRING" id="348780.NP_3520A"/>
<dbReference type="EnsemblBacteria" id="CAI49851">
    <property type="protein sequence ID" value="CAI49851"/>
    <property type="gene ID" value="NP_3520A"/>
</dbReference>
<dbReference type="GeneID" id="3703088"/>
<dbReference type="KEGG" id="nph:NP_3520A"/>
<dbReference type="eggNOG" id="arCOG04229">
    <property type="taxonomic scope" value="Archaea"/>
</dbReference>
<dbReference type="HOGENOM" id="CLU_128576_0_0_2"/>
<dbReference type="OrthoDB" id="7000at2157"/>
<dbReference type="Proteomes" id="UP000002698">
    <property type="component" value="Chromosome"/>
</dbReference>
<dbReference type="GO" id="GO:0009347">
    <property type="term" value="C:aspartate carbamoyltransferase complex"/>
    <property type="evidence" value="ECO:0007669"/>
    <property type="project" value="InterPro"/>
</dbReference>
<dbReference type="GO" id="GO:0046872">
    <property type="term" value="F:metal ion binding"/>
    <property type="evidence" value="ECO:0007669"/>
    <property type="project" value="UniProtKB-KW"/>
</dbReference>
<dbReference type="GO" id="GO:0006207">
    <property type="term" value="P:'de novo' pyrimidine nucleobase biosynthetic process"/>
    <property type="evidence" value="ECO:0007669"/>
    <property type="project" value="InterPro"/>
</dbReference>
<dbReference type="GO" id="GO:0006221">
    <property type="term" value="P:pyrimidine nucleotide biosynthetic process"/>
    <property type="evidence" value="ECO:0007669"/>
    <property type="project" value="UniProtKB-UniRule"/>
</dbReference>
<dbReference type="Gene3D" id="2.30.30.20">
    <property type="entry name" value="Aspartate carbamoyltransferase regulatory subunit, C-terminal domain"/>
    <property type="match status" value="1"/>
</dbReference>
<dbReference type="Gene3D" id="3.30.70.140">
    <property type="entry name" value="Aspartate carbamoyltransferase regulatory subunit, N-terminal domain"/>
    <property type="match status" value="1"/>
</dbReference>
<dbReference type="HAMAP" id="MF_00002">
    <property type="entry name" value="Asp_carb_tr_reg"/>
    <property type="match status" value="1"/>
</dbReference>
<dbReference type="InterPro" id="IPR020545">
    <property type="entry name" value="Asp_carbamoyltransf_reg_N"/>
</dbReference>
<dbReference type="InterPro" id="IPR002801">
    <property type="entry name" value="Asp_carbamoylTrfase_reg"/>
</dbReference>
<dbReference type="InterPro" id="IPR020542">
    <property type="entry name" value="Asp_carbamoyltrfase_reg_C"/>
</dbReference>
<dbReference type="InterPro" id="IPR036792">
    <property type="entry name" value="Asp_carbatrfase_reg_C_sf"/>
</dbReference>
<dbReference type="InterPro" id="IPR036793">
    <property type="entry name" value="Asp_carbatrfase_reg_N_sf"/>
</dbReference>
<dbReference type="NCBIfam" id="TIGR00240">
    <property type="entry name" value="ATCase_reg"/>
    <property type="match status" value="1"/>
</dbReference>
<dbReference type="PANTHER" id="PTHR35805">
    <property type="entry name" value="ASPARTATE CARBAMOYLTRANSFERASE REGULATORY CHAIN"/>
    <property type="match status" value="1"/>
</dbReference>
<dbReference type="PANTHER" id="PTHR35805:SF1">
    <property type="entry name" value="ASPARTATE CARBAMOYLTRANSFERASE REGULATORY CHAIN"/>
    <property type="match status" value="1"/>
</dbReference>
<dbReference type="Pfam" id="PF01948">
    <property type="entry name" value="PyrI"/>
    <property type="match status" value="1"/>
</dbReference>
<dbReference type="Pfam" id="PF02748">
    <property type="entry name" value="PyrI_C"/>
    <property type="match status" value="1"/>
</dbReference>
<dbReference type="SUPFAM" id="SSF57825">
    <property type="entry name" value="Aspartate carbamoyltransferase, Regulatory-chain, C-terminal domain"/>
    <property type="match status" value="1"/>
</dbReference>
<dbReference type="SUPFAM" id="SSF54893">
    <property type="entry name" value="Aspartate carbamoyltransferase, Regulatory-chain, N-terminal domain"/>
    <property type="match status" value="1"/>
</dbReference>
<name>PYRI_NATPD</name>
<evidence type="ECO:0000255" key="1">
    <source>
        <dbReference type="HAMAP-Rule" id="MF_00002"/>
    </source>
</evidence>
<accession>Q3IPU7</accession>
<organism>
    <name type="scientific">Natronomonas pharaonis (strain ATCC 35678 / DSM 2160 / CIP 103997 / JCM 8858 / NBRC 14720 / NCIMB 2260 / Gabara)</name>
    <name type="common">Halobacterium pharaonis</name>
    <dbReference type="NCBI Taxonomy" id="348780"/>
    <lineage>
        <taxon>Archaea</taxon>
        <taxon>Methanobacteriati</taxon>
        <taxon>Methanobacteriota</taxon>
        <taxon>Stenosarchaea group</taxon>
        <taxon>Halobacteria</taxon>
        <taxon>Halobacteriales</taxon>
        <taxon>Haloarculaceae</taxon>
        <taxon>Natronomonas</taxon>
    </lineage>
</organism>
<protein>
    <recommendedName>
        <fullName evidence="1">Aspartate carbamoyltransferase regulatory chain</fullName>
    </recommendedName>
</protein>
<keyword id="KW-0479">Metal-binding</keyword>
<keyword id="KW-0665">Pyrimidine biosynthesis</keyword>
<keyword id="KW-1185">Reference proteome</keyword>
<keyword id="KW-0862">Zinc</keyword>
<gene>
    <name evidence="1" type="primary">pyrI</name>
    <name type="ordered locus">NP_3520A</name>
</gene>
<reference key="1">
    <citation type="journal article" date="2005" name="Genome Res.">
        <title>Living with two extremes: conclusions from the genome sequence of Natronomonas pharaonis.</title>
        <authorList>
            <person name="Falb M."/>
            <person name="Pfeiffer F."/>
            <person name="Palm P."/>
            <person name="Rodewald K."/>
            <person name="Hickmann V."/>
            <person name="Tittor J."/>
            <person name="Oesterhelt D."/>
        </authorList>
    </citation>
    <scope>NUCLEOTIDE SEQUENCE [LARGE SCALE GENOMIC DNA]</scope>
    <source>
        <strain>ATCC 35678 / DSM 2160 / CIP 103997 / JCM 8858 / NBRC 14720 / NCIMB 2260 / Gabara</strain>
    </source>
</reference>
<sequence>MTDTELRVSKIQKGTVIDHIAGGQALNVLAILGIDGTSGDEISVGMNVPSDRLGRKDIVKVEGRELSQNEVDVLSLIAPAATINIVRDFEVIEKHRVTRPETVEGVLSCPNANCITTENEPVDSRFEVLEAGVRCSYCGTIIRESLAAHISVA</sequence>
<proteinExistence type="inferred from homology"/>